<name>GLYA_SYNS9</name>
<gene>
    <name evidence="1" type="primary">glyA</name>
    <name type="ordered locus">Syncc9902_2091</name>
</gene>
<proteinExistence type="inferred from homology"/>
<sequence length="429" mass="46181">MSQVSERAINAGLASADPEISRLIDQERHRQETHLELIASENFASQAVMQAQGSVLTNKYAEGLPAKRYYGGCEHVDAIETLAIERAKQLFDAAWANVQPHSGAQANFAVFLALLKPGDTIMGLDLSHGGHLTHGSPVNVSGKWFNVVQYGVDPTTQRLDMEAIRKLALEHKPKLIVCGYSAYPRTIDFAAFRSIADEVGAFLLADMAHIAGLVAAGVHPSPVPHCDVVTTTTHKTLRGPRGGLILCRDAEFAKKFDKAVFPGTQGGPLEHVIAAKAVAFGEALQPSFKTYSQQVVANAGALAEQLISRGINVVSGGTDNHVVLLDLRSIGMTGKVADLLVSDVHITANKNTVPFDPESPFVTSGLRLGTAALTTRGFDVDAFREVADVIADRLHHPEDDAIRQRCLERVSILCSRFPLYADSKEPALV</sequence>
<organism>
    <name type="scientific">Synechococcus sp. (strain CC9902)</name>
    <dbReference type="NCBI Taxonomy" id="316279"/>
    <lineage>
        <taxon>Bacteria</taxon>
        <taxon>Bacillati</taxon>
        <taxon>Cyanobacteriota</taxon>
        <taxon>Cyanophyceae</taxon>
        <taxon>Synechococcales</taxon>
        <taxon>Synechococcaceae</taxon>
        <taxon>Synechococcus</taxon>
    </lineage>
</organism>
<protein>
    <recommendedName>
        <fullName evidence="1">Serine hydroxymethyltransferase</fullName>
        <shortName evidence="1">SHMT</shortName>
        <shortName evidence="1">Serine methylase</shortName>
        <ecNumber evidence="1">2.1.2.1</ecNumber>
    </recommendedName>
</protein>
<evidence type="ECO:0000255" key="1">
    <source>
        <dbReference type="HAMAP-Rule" id="MF_00051"/>
    </source>
</evidence>
<comment type="function">
    <text evidence="1">Catalyzes the reversible interconversion of serine and glycine with tetrahydrofolate (THF) serving as the one-carbon carrier. This reaction serves as the major source of one-carbon groups required for the biosynthesis of purines, thymidylate, methionine, and other important biomolecules. Also exhibits THF-independent aldolase activity toward beta-hydroxyamino acids, producing glycine and aldehydes, via a retro-aldol mechanism.</text>
</comment>
<comment type="catalytic activity">
    <reaction evidence="1">
        <text>(6R)-5,10-methylene-5,6,7,8-tetrahydrofolate + glycine + H2O = (6S)-5,6,7,8-tetrahydrofolate + L-serine</text>
        <dbReference type="Rhea" id="RHEA:15481"/>
        <dbReference type="ChEBI" id="CHEBI:15377"/>
        <dbReference type="ChEBI" id="CHEBI:15636"/>
        <dbReference type="ChEBI" id="CHEBI:33384"/>
        <dbReference type="ChEBI" id="CHEBI:57305"/>
        <dbReference type="ChEBI" id="CHEBI:57453"/>
        <dbReference type="EC" id="2.1.2.1"/>
    </reaction>
</comment>
<comment type="cofactor">
    <cofactor evidence="1">
        <name>pyridoxal 5'-phosphate</name>
        <dbReference type="ChEBI" id="CHEBI:597326"/>
    </cofactor>
</comment>
<comment type="pathway">
    <text evidence="1">One-carbon metabolism; tetrahydrofolate interconversion.</text>
</comment>
<comment type="pathway">
    <text evidence="1">Amino-acid biosynthesis; glycine biosynthesis; glycine from L-serine: step 1/1.</text>
</comment>
<comment type="subunit">
    <text evidence="1">Homodimer.</text>
</comment>
<comment type="subcellular location">
    <subcellularLocation>
        <location evidence="1">Cytoplasm</location>
    </subcellularLocation>
</comment>
<comment type="similarity">
    <text evidence="1">Belongs to the SHMT family.</text>
</comment>
<dbReference type="EC" id="2.1.2.1" evidence="1"/>
<dbReference type="EMBL" id="CP000097">
    <property type="protein sequence ID" value="ABB27049.1"/>
    <property type="molecule type" value="Genomic_DNA"/>
</dbReference>
<dbReference type="RefSeq" id="WP_011360833.1">
    <property type="nucleotide sequence ID" value="NC_007513.1"/>
</dbReference>
<dbReference type="SMR" id="Q3AW18"/>
<dbReference type="STRING" id="316279.Syncc9902_2091"/>
<dbReference type="KEGG" id="sye:Syncc9902_2091"/>
<dbReference type="eggNOG" id="COG0112">
    <property type="taxonomic scope" value="Bacteria"/>
</dbReference>
<dbReference type="HOGENOM" id="CLU_022477_2_1_3"/>
<dbReference type="OrthoDB" id="9803846at2"/>
<dbReference type="UniPathway" id="UPA00193"/>
<dbReference type="UniPathway" id="UPA00288">
    <property type="reaction ID" value="UER01023"/>
</dbReference>
<dbReference type="Proteomes" id="UP000002712">
    <property type="component" value="Chromosome"/>
</dbReference>
<dbReference type="GO" id="GO:0005829">
    <property type="term" value="C:cytosol"/>
    <property type="evidence" value="ECO:0007669"/>
    <property type="project" value="TreeGrafter"/>
</dbReference>
<dbReference type="GO" id="GO:0004372">
    <property type="term" value="F:glycine hydroxymethyltransferase activity"/>
    <property type="evidence" value="ECO:0007669"/>
    <property type="project" value="UniProtKB-UniRule"/>
</dbReference>
<dbReference type="GO" id="GO:0030170">
    <property type="term" value="F:pyridoxal phosphate binding"/>
    <property type="evidence" value="ECO:0007669"/>
    <property type="project" value="UniProtKB-UniRule"/>
</dbReference>
<dbReference type="GO" id="GO:0019264">
    <property type="term" value="P:glycine biosynthetic process from serine"/>
    <property type="evidence" value="ECO:0007669"/>
    <property type="project" value="UniProtKB-UniRule"/>
</dbReference>
<dbReference type="GO" id="GO:0035999">
    <property type="term" value="P:tetrahydrofolate interconversion"/>
    <property type="evidence" value="ECO:0007669"/>
    <property type="project" value="UniProtKB-UniRule"/>
</dbReference>
<dbReference type="CDD" id="cd00378">
    <property type="entry name" value="SHMT"/>
    <property type="match status" value="1"/>
</dbReference>
<dbReference type="FunFam" id="3.40.640.10:FF:000001">
    <property type="entry name" value="Serine hydroxymethyltransferase"/>
    <property type="match status" value="1"/>
</dbReference>
<dbReference type="Gene3D" id="3.90.1150.10">
    <property type="entry name" value="Aspartate Aminotransferase, domain 1"/>
    <property type="match status" value="1"/>
</dbReference>
<dbReference type="Gene3D" id="3.40.640.10">
    <property type="entry name" value="Type I PLP-dependent aspartate aminotransferase-like (Major domain)"/>
    <property type="match status" value="1"/>
</dbReference>
<dbReference type="HAMAP" id="MF_00051">
    <property type="entry name" value="SHMT"/>
    <property type="match status" value="1"/>
</dbReference>
<dbReference type="InterPro" id="IPR015424">
    <property type="entry name" value="PyrdxlP-dep_Trfase"/>
</dbReference>
<dbReference type="InterPro" id="IPR015421">
    <property type="entry name" value="PyrdxlP-dep_Trfase_major"/>
</dbReference>
<dbReference type="InterPro" id="IPR015422">
    <property type="entry name" value="PyrdxlP-dep_Trfase_small"/>
</dbReference>
<dbReference type="InterPro" id="IPR001085">
    <property type="entry name" value="Ser_HO-MeTrfase"/>
</dbReference>
<dbReference type="InterPro" id="IPR049943">
    <property type="entry name" value="Ser_HO-MeTrfase-like"/>
</dbReference>
<dbReference type="InterPro" id="IPR019798">
    <property type="entry name" value="Ser_HO-MeTrfase_PLP_BS"/>
</dbReference>
<dbReference type="InterPro" id="IPR039429">
    <property type="entry name" value="SHMT-like_dom"/>
</dbReference>
<dbReference type="NCBIfam" id="NF000586">
    <property type="entry name" value="PRK00011.1"/>
    <property type="match status" value="1"/>
</dbReference>
<dbReference type="PANTHER" id="PTHR11680">
    <property type="entry name" value="SERINE HYDROXYMETHYLTRANSFERASE"/>
    <property type="match status" value="1"/>
</dbReference>
<dbReference type="PANTHER" id="PTHR11680:SF35">
    <property type="entry name" value="SERINE HYDROXYMETHYLTRANSFERASE 1"/>
    <property type="match status" value="1"/>
</dbReference>
<dbReference type="Pfam" id="PF00464">
    <property type="entry name" value="SHMT"/>
    <property type="match status" value="1"/>
</dbReference>
<dbReference type="PIRSF" id="PIRSF000412">
    <property type="entry name" value="SHMT"/>
    <property type="match status" value="1"/>
</dbReference>
<dbReference type="SUPFAM" id="SSF53383">
    <property type="entry name" value="PLP-dependent transferases"/>
    <property type="match status" value="1"/>
</dbReference>
<dbReference type="PROSITE" id="PS00096">
    <property type="entry name" value="SHMT"/>
    <property type="match status" value="1"/>
</dbReference>
<accession>Q3AW18</accession>
<feature type="chain" id="PRO_0000235035" description="Serine hydroxymethyltransferase">
    <location>
        <begin position="1"/>
        <end position="429"/>
    </location>
</feature>
<feature type="binding site" evidence="1">
    <location>
        <position position="126"/>
    </location>
    <ligand>
        <name>(6S)-5,6,7,8-tetrahydrofolate</name>
        <dbReference type="ChEBI" id="CHEBI:57453"/>
    </ligand>
</feature>
<feature type="binding site" evidence="1">
    <location>
        <begin position="130"/>
        <end position="132"/>
    </location>
    <ligand>
        <name>(6S)-5,6,7,8-tetrahydrofolate</name>
        <dbReference type="ChEBI" id="CHEBI:57453"/>
    </ligand>
</feature>
<feature type="binding site" evidence="1">
    <location>
        <begin position="359"/>
        <end position="361"/>
    </location>
    <ligand>
        <name>(6S)-5,6,7,8-tetrahydrofolate</name>
        <dbReference type="ChEBI" id="CHEBI:57453"/>
    </ligand>
</feature>
<feature type="site" description="Plays an important role in substrate specificity" evidence="1">
    <location>
        <position position="234"/>
    </location>
</feature>
<feature type="modified residue" description="N6-(pyridoxal phosphate)lysine" evidence="1">
    <location>
        <position position="235"/>
    </location>
</feature>
<reference key="1">
    <citation type="submission" date="2005-08" db="EMBL/GenBank/DDBJ databases">
        <title>Complete sequence of Synechococcus sp. CC9902.</title>
        <authorList>
            <person name="Copeland A."/>
            <person name="Lucas S."/>
            <person name="Lapidus A."/>
            <person name="Barry K."/>
            <person name="Detter J.C."/>
            <person name="Glavina T."/>
            <person name="Hammon N."/>
            <person name="Israni S."/>
            <person name="Pitluck S."/>
            <person name="Martinez M."/>
            <person name="Schmutz J."/>
            <person name="Larimer F."/>
            <person name="Land M."/>
            <person name="Kyrpides N."/>
            <person name="Ivanova N."/>
            <person name="Richardson P."/>
        </authorList>
    </citation>
    <scope>NUCLEOTIDE SEQUENCE [LARGE SCALE GENOMIC DNA]</scope>
    <source>
        <strain>CC9902</strain>
    </source>
</reference>
<keyword id="KW-0028">Amino-acid biosynthesis</keyword>
<keyword id="KW-0963">Cytoplasm</keyword>
<keyword id="KW-0554">One-carbon metabolism</keyword>
<keyword id="KW-0663">Pyridoxal phosphate</keyword>
<keyword id="KW-1185">Reference proteome</keyword>
<keyword id="KW-0808">Transferase</keyword>